<reference key="1">
    <citation type="journal article" date="2011" name="Proc. Natl. Acad. Sci. U.S.A.">
        <title>Genomic anatomy of Escherichia coli O157:H7 outbreaks.</title>
        <authorList>
            <person name="Eppinger M."/>
            <person name="Mammel M.K."/>
            <person name="Leclerc J.E."/>
            <person name="Ravel J."/>
            <person name="Cebula T.A."/>
        </authorList>
    </citation>
    <scope>NUCLEOTIDE SEQUENCE [LARGE SCALE GENOMIC DNA]</scope>
    <source>
        <strain>EC4115 / EHEC</strain>
    </source>
</reference>
<dbReference type="EMBL" id="CP001164">
    <property type="protein sequence ID" value="ACI34980.1"/>
    <property type="molecule type" value="Genomic_DNA"/>
</dbReference>
<dbReference type="RefSeq" id="WP_001302036.1">
    <property type="nucleotide sequence ID" value="NC_011353.1"/>
</dbReference>
<dbReference type="SMR" id="B5YQ29"/>
<dbReference type="GeneID" id="75203048"/>
<dbReference type="KEGG" id="ecf:ECH74115_2459"/>
<dbReference type="HOGENOM" id="CLU_090931_5_0_6"/>
<dbReference type="CDD" id="cd20293">
    <property type="entry name" value="cupin_HutD_N"/>
    <property type="match status" value="1"/>
</dbReference>
<dbReference type="Gene3D" id="2.60.120.10">
    <property type="entry name" value="Jelly Rolls"/>
    <property type="match status" value="1"/>
</dbReference>
<dbReference type="HAMAP" id="MF_01591">
    <property type="entry name" value="Ves"/>
    <property type="match status" value="1"/>
</dbReference>
<dbReference type="InterPro" id="IPR014710">
    <property type="entry name" value="RmlC-like_jellyroll"/>
</dbReference>
<dbReference type="InterPro" id="IPR011051">
    <property type="entry name" value="RmlC_Cupin_sf"/>
</dbReference>
<dbReference type="InterPro" id="IPR010282">
    <property type="entry name" value="Uncharacterised_HutD/Ves"/>
</dbReference>
<dbReference type="InterPro" id="IPR023482">
    <property type="entry name" value="Uncharacterised_Ves"/>
</dbReference>
<dbReference type="NCBIfam" id="NF008488">
    <property type="entry name" value="PRK11396.1"/>
    <property type="match status" value="1"/>
</dbReference>
<dbReference type="PANTHER" id="PTHR37943">
    <property type="entry name" value="PROTEIN VES"/>
    <property type="match status" value="1"/>
</dbReference>
<dbReference type="PANTHER" id="PTHR37943:SF1">
    <property type="entry name" value="PROTEIN VES"/>
    <property type="match status" value="1"/>
</dbReference>
<dbReference type="Pfam" id="PF05962">
    <property type="entry name" value="HutD"/>
    <property type="match status" value="1"/>
</dbReference>
<dbReference type="SUPFAM" id="SSF51182">
    <property type="entry name" value="RmlC-like cupins"/>
    <property type="match status" value="1"/>
</dbReference>
<accession>B5YQ29</accession>
<gene>
    <name evidence="1" type="primary">ves</name>
    <name type="ordered locus">ECH74115_2459</name>
</gene>
<feature type="chain" id="PRO_1000201501" description="Protein Ves">
    <location>
        <begin position="1"/>
        <end position="191"/>
    </location>
</feature>
<proteinExistence type="inferred from homology"/>
<sequence>MEYFDMRKMSVNLWRNAAGETREICTFPPAKRDFYWRASIASIAANGEFSLFPGMERIVTLLEGGEMFLESADHFNHTLKPLQPFAFAADQVVKAKLTAGQMSMDFNIMTRLDVCKAKVRIAERTFTTFGSRGGVVFVINGAWQLGDKLLTTDQGACWFDGRHTLRLLQPQGKLLFSEINWLAGHSPDQVQ</sequence>
<comment type="similarity">
    <text evidence="1">Belongs to the Ves family.</text>
</comment>
<evidence type="ECO:0000255" key="1">
    <source>
        <dbReference type="HAMAP-Rule" id="MF_01591"/>
    </source>
</evidence>
<protein>
    <recommendedName>
        <fullName evidence="1">Protein Ves</fullName>
    </recommendedName>
</protein>
<name>VES_ECO5E</name>
<organism>
    <name type="scientific">Escherichia coli O157:H7 (strain EC4115 / EHEC)</name>
    <dbReference type="NCBI Taxonomy" id="444450"/>
    <lineage>
        <taxon>Bacteria</taxon>
        <taxon>Pseudomonadati</taxon>
        <taxon>Pseudomonadota</taxon>
        <taxon>Gammaproteobacteria</taxon>
        <taxon>Enterobacterales</taxon>
        <taxon>Enterobacteriaceae</taxon>
        <taxon>Escherichia</taxon>
    </lineage>
</organism>